<reference key="1">
    <citation type="journal article" date="2009" name="Genome Biol.">
        <title>Genomic and genetic analyses of diversity and plant interactions of Pseudomonas fluorescens.</title>
        <authorList>
            <person name="Silby M.W."/>
            <person name="Cerdeno-Tarraga A.M."/>
            <person name="Vernikos G.S."/>
            <person name="Giddens S.R."/>
            <person name="Jackson R.W."/>
            <person name="Preston G.M."/>
            <person name="Zhang X.-X."/>
            <person name="Moon C.D."/>
            <person name="Gehrig S.M."/>
            <person name="Godfrey S.A.C."/>
            <person name="Knight C.G."/>
            <person name="Malone J.G."/>
            <person name="Robinson Z."/>
            <person name="Spiers A.J."/>
            <person name="Harris S."/>
            <person name="Challis G.L."/>
            <person name="Yaxley A.M."/>
            <person name="Harris D."/>
            <person name="Seeger K."/>
            <person name="Murphy L."/>
            <person name="Rutter S."/>
            <person name="Squares R."/>
            <person name="Quail M.A."/>
            <person name="Saunders E."/>
            <person name="Mavromatis K."/>
            <person name="Brettin T.S."/>
            <person name="Bentley S.D."/>
            <person name="Hothersall J."/>
            <person name="Stephens E."/>
            <person name="Thomas C.M."/>
            <person name="Parkhill J."/>
            <person name="Levy S.B."/>
            <person name="Rainey P.B."/>
            <person name="Thomson N.R."/>
        </authorList>
    </citation>
    <scope>NUCLEOTIDE SEQUENCE [LARGE SCALE GENOMIC DNA]</scope>
    <source>
        <strain>SBW25</strain>
    </source>
</reference>
<gene>
    <name evidence="1" type="primary">dut</name>
    <name type="ordered locus">PFLU_5984</name>
</gene>
<feature type="chain" id="PRO_1000202987" description="Deoxyuridine 5'-triphosphate nucleotidohydrolase">
    <location>
        <begin position="1"/>
        <end position="151"/>
    </location>
</feature>
<feature type="binding site" evidence="1">
    <location>
        <begin position="70"/>
        <end position="72"/>
    </location>
    <ligand>
        <name>substrate</name>
    </ligand>
</feature>
<feature type="binding site" evidence="1">
    <location>
        <position position="83"/>
    </location>
    <ligand>
        <name>substrate</name>
    </ligand>
</feature>
<feature type="binding site" evidence="1">
    <location>
        <begin position="87"/>
        <end position="89"/>
    </location>
    <ligand>
        <name>substrate</name>
    </ligand>
</feature>
<feature type="binding site" evidence="1">
    <location>
        <position position="97"/>
    </location>
    <ligand>
        <name>substrate</name>
    </ligand>
</feature>
<dbReference type="EC" id="3.6.1.23" evidence="1"/>
<dbReference type="EMBL" id="AM181176">
    <property type="protein sequence ID" value="CAY53509.1"/>
    <property type="molecule type" value="Genomic_DNA"/>
</dbReference>
<dbReference type="RefSeq" id="WP_010207501.1">
    <property type="nucleotide sequence ID" value="NC_012660.1"/>
</dbReference>
<dbReference type="SMR" id="C3K473"/>
<dbReference type="STRING" id="294.SRM1_05680"/>
<dbReference type="GeneID" id="93467612"/>
<dbReference type="eggNOG" id="COG0756">
    <property type="taxonomic scope" value="Bacteria"/>
</dbReference>
<dbReference type="HOGENOM" id="CLU_068508_1_1_6"/>
<dbReference type="OrthoDB" id="9809956at2"/>
<dbReference type="UniPathway" id="UPA00610">
    <property type="reaction ID" value="UER00666"/>
</dbReference>
<dbReference type="GO" id="GO:0004170">
    <property type="term" value="F:dUTP diphosphatase activity"/>
    <property type="evidence" value="ECO:0007669"/>
    <property type="project" value="UniProtKB-UniRule"/>
</dbReference>
<dbReference type="GO" id="GO:0000287">
    <property type="term" value="F:magnesium ion binding"/>
    <property type="evidence" value="ECO:0007669"/>
    <property type="project" value="UniProtKB-UniRule"/>
</dbReference>
<dbReference type="GO" id="GO:0006226">
    <property type="term" value="P:dUMP biosynthetic process"/>
    <property type="evidence" value="ECO:0007669"/>
    <property type="project" value="UniProtKB-UniRule"/>
</dbReference>
<dbReference type="GO" id="GO:0046081">
    <property type="term" value="P:dUTP catabolic process"/>
    <property type="evidence" value="ECO:0007669"/>
    <property type="project" value="InterPro"/>
</dbReference>
<dbReference type="CDD" id="cd07557">
    <property type="entry name" value="trimeric_dUTPase"/>
    <property type="match status" value="1"/>
</dbReference>
<dbReference type="FunFam" id="2.70.40.10:FF:000002">
    <property type="entry name" value="dUTP diphosphatase"/>
    <property type="match status" value="1"/>
</dbReference>
<dbReference type="Gene3D" id="2.70.40.10">
    <property type="match status" value="1"/>
</dbReference>
<dbReference type="HAMAP" id="MF_00116">
    <property type="entry name" value="dUTPase_bact"/>
    <property type="match status" value="1"/>
</dbReference>
<dbReference type="InterPro" id="IPR008181">
    <property type="entry name" value="dUTPase"/>
</dbReference>
<dbReference type="InterPro" id="IPR029054">
    <property type="entry name" value="dUTPase-like"/>
</dbReference>
<dbReference type="InterPro" id="IPR036157">
    <property type="entry name" value="dUTPase-like_sf"/>
</dbReference>
<dbReference type="InterPro" id="IPR033704">
    <property type="entry name" value="dUTPase_trimeric"/>
</dbReference>
<dbReference type="NCBIfam" id="TIGR00576">
    <property type="entry name" value="dut"/>
    <property type="match status" value="1"/>
</dbReference>
<dbReference type="NCBIfam" id="NF001862">
    <property type="entry name" value="PRK00601.1"/>
    <property type="match status" value="1"/>
</dbReference>
<dbReference type="PANTHER" id="PTHR11241">
    <property type="entry name" value="DEOXYURIDINE 5'-TRIPHOSPHATE NUCLEOTIDOHYDROLASE"/>
    <property type="match status" value="1"/>
</dbReference>
<dbReference type="PANTHER" id="PTHR11241:SF0">
    <property type="entry name" value="DEOXYURIDINE 5'-TRIPHOSPHATE NUCLEOTIDOHYDROLASE"/>
    <property type="match status" value="1"/>
</dbReference>
<dbReference type="Pfam" id="PF00692">
    <property type="entry name" value="dUTPase"/>
    <property type="match status" value="1"/>
</dbReference>
<dbReference type="SUPFAM" id="SSF51283">
    <property type="entry name" value="dUTPase-like"/>
    <property type="match status" value="1"/>
</dbReference>
<name>DUT_PSEFS</name>
<proteinExistence type="inferred from homology"/>
<accession>C3K473</accession>
<sequence length="151" mass="16032">MHALQAKILDPRIGNEFPLPAYATPGSAGLDLRAMLKEDTVLEPGQTLLIPTGLSIYVGDPGLAALILPRSGLGHKHGIVLGNLVGLIDSDYQGELMVSCWNRGQTAFNIAVGERIAQLVLVPVVQAHFELVEEFDETQRGAGGFGHSGSH</sequence>
<organism>
    <name type="scientific">Pseudomonas fluorescens (strain SBW25)</name>
    <dbReference type="NCBI Taxonomy" id="216595"/>
    <lineage>
        <taxon>Bacteria</taxon>
        <taxon>Pseudomonadati</taxon>
        <taxon>Pseudomonadota</taxon>
        <taxon>Gammaproteobacteria</taxon>
        <taxon>Pseudomonadales</taxon>
        <taxon>Pseudomonadaceae</taxon>
        <taxon>Pseudomonas</taxon>
    </lineage>
</organism>
<comment type="function">
    <text evidence="1">This enzyme is involved in nucleotide metabolism: it produces dUMP, the immediate precursor of thymidine nucleotides and it decreases the intracellular concentration of dUTP so that uracil cannot be incorporated into DNA.</text>
</comment>
<comment type="catalytic activity">
    <reaction evidence="1">
        <text>dUTP + H2O = dUMP + diphosphate + H(+)</text>
        <dbReference type="Rhea" id="RHEA:10248"/>
        <dbReference type="ChEBI" id="CHEBI:15377"/>
        <dbReference type="ChEBI" id="CHEBI:15378"/>
        <dbReference type="ChEBI" id="CHEBI:33019"/>
        <dbReference type="ChEBI" id="CHEBI:61555"/>
        <dbReference type="ChEBI" id="CHEBI:246422"/>
        <dbReference type="EC" id="3.6.1.23"/>
    </reaction>
</comment>
<comment type="cofactor">
    <cofactor evidence="1">
        <name>Mg(2+)</name>
        <dbReference type="ChEBI" id="CHEBI:18420"/>
    </cofactor>
</comment>
<comment type="pathway">
    <text evidence="1">Pyrimidine metabolism; dUMP biosynthesis; dUMP from dCTP (dUTP route): step 2/2.</text>
</comment>
<comment type="similarity">
    <text evidence="1">Belongs to the dUTPase family.</text>
</comment>
<protein>
    <recommendedName>
        <fullName evidence="1">Deoxyuridine 5'-triphosphate nucleotidohydrolase</fullName>
        <shortName evidence="1">dUTPase</shortName>
        <ecNumber evidence="1">3.6.1.23</ecNumber>
    </recommendedName>
    <alternativeName>
        <fullName evidence="1">dUTP pyrophosphatase</fullName>
    </alternativeName>
</protein>
<evidence type="ECO:0000255" key="1">
    <source>
        <dbReference type="HAMAP-Rule" id="MF_00116"/>
    </source>
</evidence>
<keyword id="KW-0378">Hydrolase</keyword>
<keyword id="KW-0460">Magnesium</keyword>
<keyword id="KW-0479">Metal-binding</keyword>
<keyword id="KW-0546">Nucleotide metabolism</keyword>